<sequence>MSNRKYFGTDGIRGRVGDAPITPDFVLKLGWAAGKVLARHGSRKIIIGKDTRISGYMLESALEAGLAAAGLSALFTGPMPTPAVAYLTRTFRAEAGIVISASHNPFYDNGIKFFSIDGTKLPDAVEEAIEAEMEKEISCVDSAELGKASRIVDAAGRYIEFCKATFPNELSLSELKIVVDCANGATYHIAPNVLRELGANVIAIGCEPNGVNINAEVGATDVRALQARVLAEKADLGIAFDGDGDRVIMVDHEGNKVDGDQIMYIIAREGLRQGQLRGGAVGTLMSNMGLELALKQLGIPFARAKVGDRYVLEKMQEKGWRIGAENSGHVILLDKTTTGDGIVAGLQVLAAMARNHMSLHDLCSGMKMFPQILVNVRYTAGSGDPLEHESVKAVTAEVEAALGSRGRVLLRKSGTEPLIRVMVEGEDEAQVTEFAHRIADAVKAV</sequence>
<evidence type="ECO:0000255" key="1">
    <source>
        <dbReference type="HAMAP-Rule" id="MF_01554"/>
    </source>
</evidence>
<keyword id="KW-0413">Isomerase</keyword>
<keyword id="KW-0460">Magnesium</keyword>
<keyword id="KW-0479">Metal-binding</keyword>
<keyword id="KW-0597">Phosphoprotein</keyword>
<protein>
    <recommendedName>
        <fullName evidence="1">Phosphoglucosamine mutase</fullName>
        <ecNumber evidence="1">5.4.2.10</ecNumber>
    </recommendedName>
</protein>
<accession>B7NDG0</accession>
<proteinExistence type="inferred from homology"/>
<gene>
    <name evidence="1" type="primary">glmM</name>
    <name type="ordered locus">ECUMN_3656</name>
</gene>
<organism>
    <name type="scientific">Escherichia coli O17:K52:H18 (strain UMN026 / ExPEC)</name>
    <dbReference type="NCBI Taxonomy" id="585056"/>
    <lineage>
        <taxon>Bacteria</taxon>
        <taxon>Pseudomonadati</taxon>
        <taxon>Pseudomonadota</taxon>
        <taxon>Gammaproteobacteria</taxon>
        <taxon>Enterobacterales</taxon>
        <taxon>Enterobacteriaceae</taxon>
        <taxon>Escherichia</taxon>
    </lineage>
</organism>
<dbReference type="EC" id="5.4.2.10" evidence="1"/>
<dbReference type="EMBL" id="CU928163">
    <property type="protein sequence ID" value="CAR14810.1"/>
    <property type="molecule type" value="Genomic_DNA"/>
</dbReference>
<dbReference type="RefSeq" id="WP_000071137.1">
    <property type="nucleotide sequence ID" value="NC_011751.1"/>
</dbReference>
<dbReference type="RefSeq" id="YP_002414315.1">
    <property type="nucleotide sequence ID" value="NC_011751.1"/>
</dbReference>
<dbReference type="SMR" id="B7NDG0"/>
<dbReference type="STRING" id="585056.ECUMN_3656"/>
<dbReference type="GeneID" id="93778805"/>
<dbReference type="KEGG" id="eum:ECUMN_3656"/>
<dbReference type="PATRIC" id="fig|585056.7.peg.3836"/>
<dbReference type="HOGENOM" id="CLU_016950_7_0_6"/>
<dbReference type="Proteomes" id="UP000007097">
    <property type="component" value="Chromosome"/>
</dbReference>
<dbReference type="GO" id="GO:0005829">
    <property type="term" value="C:cytosol"/>
    <property type="evidence" value="ECO:0007669"/>
    <property type="project" value="TreeGrafter"/>
</dbReference>
<dbReference type="GO" id="GO:0000287">
    <property type="term" value="F:magnesium ion binding"/>
    <property type="evidence" value="ECO:0007669"/>
    <property type="project" value="UniProtKB-UniRule"/>
</dbReference>
<dbReference type="GO" id="GO:0008966">
    <property type="term" value="F:phosphoglucosamine mutase activity"/>
    <property type="evidence" value="ECO:0007669"/>
    <property type="project" value="UniProtKB-UniRule"/>
</dbReference>
<dbReference type="GO" id="GO:0004615">
    <property type="term" value="F:phosphomannomutase activity"/>
    <property type="evidence" value="ECO:0007669"/>
    <property type="project" value="TreeGrafter"/>
</dbReference>
<dbReference type="GO" id="GO:0005975">
    <property type="term" value="P:carbohydrate metabolic process"/>
    <property type="evidence" value="ECO:0007669"/>
    <property type="project" value="InterPro"/>
</dbReference>
<dbReference type="GO" id="GO:0009252">
    <property type="term" value="P:peptidoglycan biosynthetic process"/>
    <property type="evidence" value="ECO:0007669"/>
    <property type="project" value="TreeGrafter"/>
</dbReference>
<dbReference type="GO" id="GO:0006048">
    <property type="term" value="P:UDP-N-acetylglucosamine biosynthetic process"/>
    <property type="evidence" value="ECO:0007669"/>
    <property type="project" value="TreeGrafter"/>
</dbReference>
<dbReference type="CDD" id="cd05802">
    <property type="entry name" value="GlmM"/>
    <property type="match status" value="1"/>
</dbReference>
<dbReference type="FunFam" id="3.30.310.50:FF:000001">
    <property type="entry name" value="Phosphoglucosamine mutase"/>
    <property type="match status" value="1"/>
</dbReference>
<dbReference type="FunFam" id="3.40.120.10:FF:000001">
    <property type="entry name" value="Phosphoglucosamine mutase"/>
    <property type="match status" value="1"/>
</dbReference>
<dbReference type="FunFam" id="3.40.120.10:FF:000002">
    <property type="entry name" value="Phosphoglucosamine mutase"/>
    <property type="match status" value="1"/>
</dbReference>
<dbReference type="Gene3D" id="3.40.120.10">
    <property type="entry name" value="Alpha-D-Glucose-1,6-Bisphosphate, subunit A, domain 3"/>
    <property type="match status" value="3"/>
</dbReference>
<dbReference type="Gene3D" id="3.30.310.50">
    <property type="entry name" value="Alpha-D-phosphohexomutase, C-terminal domain"/>
    <property type="match status" value="1"/>
</dbReference>
<dbReference type="HAMAP" id="MF_01554_B">
    <property type="entry name" value="GlmM_B"/>
    <property type="match status" value="1"/>
</dbReference>
<dbReference type="InterPro" id="IPR005844">
    <property type="entry name" value="A-D-PHexomutase_a/b/a-I"/>
</dbReference>
<dbReference type="InterPro" id="IPR016055">
    <property type="entry name" value="A-D-PHexomutase_a/b/a-I/II/III"/>
</dbReference>
<dbReference type="InterPro" id="IPR005845">
    <property type="entry name" value="A-D-PHexomutase_a/b/a-II"/>
</dbReference>
<dbReference type="InterPro" id="IPR005846">
    <property type="entry name" value="A-D-PHexomutase_a/b/a-III"/>
</dbReference>
<dbReference type="InterPro" id="IPR005843">
    <property type="entry name" value="A-D-PHexomutase_C"/>
</dbReference>
<dbReference type="InterPro" id="IPR036900">
    <property type="entry name" value="A-D-PHexomutase_C_sf"/>
</dbReference>
<dbReference type="InterPro" id="IPR016066">
    <property type="entry name" value="A-D-PHexomutase_CS"/>
</dbReference>
<dbReference type="InterPro" id="IPR005841">
    <property type="entry name" value="Alpha-D-phosphohexomutase_SF"/>
</dbReference>
<dbReference type="InterPro" id="IPR006352">
    <property type="entry name" value="GlmM_bact"/>
</dbReference>
<dbReference type="InterPro" id="IPR050060">
    <property type="entry name" value="Phosphoglucosamine_mutase"/>
</dbReference>
<dbReference type="NCBIfam" id="TIGR01455">
    <property type="entry name" value="glmM"/>
    <property type="match status" value="1"/>
</dbReference>
<dbReference type="NCBIfam" id="NF008139">
    <property type="entry name" value="PRK10887.1"/>
    <property type="match status" value="1"/>
</dbReference>
<dbReference type="PANTHER" id="PTHR42946:SF1">
    <property type="entry name" value="PHOSPHOGLUCOMUTASE (ALPHA-D-GLUCOSE-1,6-BISPHOSPHATE-DEPENDENT)"/>
    <property type="match status" value="1"/>
</dbReference>
<dbReference type="PANTHER" id="PTHR42946">
    <property type="entry name" value="PHOSPHOHEXOSE MUTASE"/>
    <property type="match status" value="1"/>
</dbReference>
<dbReference type="Pfam" id="PF02878">
    <property type="entry name" value="PGM_PMM_I"/>
    <property type="match status" value="1"/>
</dbReference>
<dbReference type="Pfam" id="PF02879">
    <property type="entry name" value="PGM_PMM_II"/>
    <property type="match status" value="1"/>
</dbReference>
<dbReference type="Pfam" id="PF02880">
    <property type="entry name" value="PGM_PMM_III"/>
    <property type="match status" value="1"/>
</dbReference>
<dbReference type="Pfam" id="PF00408">
    <property type="entry name" value="PGM_PMM_IV"/>
    <property type="match status" value="1"/>
</dbReference>
<dbReference type="PRINTS" id="PR00509">
    <property type="entry name" value="PGMPMM"/>
</dbReference>
<dbReference type="SUPFAM" id="SSF55957">
    <property type="entry name" value="Phosphoglucomutase, C-terminal domain"/>
    <property type="match status" value="1"/>
</dbReference>
<dbReference type="SUPFAM" id="SSF53738">
    <property type="entry name" value="Phosphoglucomutase, first 3 domains"/>
    <property type="match status" value="3"/>
</dbReference>
<dbReference type="PROSITE" id="PS00710">
    <property type="entry name" value="PGM_PMM"/>
    <property type="match status" value="1"/>
</dbReference>
<name>GLMM_ECOLU</name>
<feature type="chain" id="PRO_1000201094" description="Phosphoglucosamine mutase">
    <location>
        <begin position="1"/>
        <end position="445"/>
    </location>
</feature>
<feature type="active site" description="Phosphoserine intermediate" evidence="1">
    <location>
        <position position="102"/>
    </location>
</feature>
<feature type="binding site" description="via phosphate group" evidence="1">
    <location>
        <position position="102"/>
    </location>
    <ligand>
        <name>Mg(2+)</name>
        <dbReference type="ChEBI" id="CHEBI:18420"/>
    </ligand>
</feature>
<feature type="binding site" evidence="1">
    <location>
        <position position="241"/>
    </location>
    <ligand>
        <name>Mg(2+)</name>
        <dbReference type="ChEBI" id="CHEBI:18420"/>
    </ligand>
</feature>
<feature type="binding site" evidence="1">
    <location>
        <position position="243"/>
    </location>
    <ligand>
        <name>Mg(2+)</name>
        <dbReference type="ChEBI" id="CHEBI:18420"/>
    </ligand>
</feature>
<feature type="binding site" evidence="1">
    <location>
        <position position="245"/>
    </location>
    <ligand>
        <name>Mg(2+)</name>
        <dbReference type="ChEBI" id="CHEBI:18420"/>
    </ligand>
</feature>
<feature type="modified residue" description="Phosphoserine" evidence="1">
    <location>
        <position position="102"/>
    </location>
</feature>
<comment type="function">
    <text evidence="1">Catalyzes the conversion of glucosamine-6-phosphate to glucosamine-1-phosphate.</text>
</comment>
<comment type="catalytic activity">
    <reaction evidence="1">
        <text>alpha-D-glucosamine 1-phosphate = D-glucosamine 6-phosphate</text>
        <dbReference type="Rhea" id="RHEA:23424"/>
        <dbReference type="ChEBI" id="CHEBI:58516"/>
        <dbReference type="ChEBI" id="CHEBI:58725"/>
        <dbReference type="EC" id="5.4.2.10"/>
    </reaction>
</comment>
<comment type="cofactor">
    <cofactor evidence="1">
        <name>Mg(2+)</name>
        <dbReference type="ChEBI" id="CHEBI:18420"/>
    </cofactor>
    <text evidence="1">Binds 1 Mg(2+) ion per subunit.</text>
</comment>
<comment type="PTM">
    <text evidence="1">Activated by phosphorylation.</text>
</comment>
<comment type="similarity">
    <text evidence="1">Belongs to the phosphohexose mutase family.</text>
</comment>
<reference key="1">
    <citation type="journal article" date="2009" name="PLoS Genet.">
        <title>Organised genome dynamics in the Escherichia coli species results in highly diverse adaptive paths.</title>
        <authorList>
            <person name="Touchon M."/>
            <person name="Hoede C."/>
            <person name="Tenaillon O."/>
            <person name="Barbe V."/>
            <person name="Baeriswyl S."/>
            <person name="Bidet P."/>
            <person name="Bingen E."/>
            <person name="Bonacorsi S."/>
            <person name="Bouchier C."/>
            <person name="Bouvet O."/>
            <person name="Calteau A."/>
            <person name="Chiapello H."/>
            <person name="Clermont O."/>
            <person name="Cruveiller S."/>
            <person name="Danchin A."/>
            <person name="Diard M."/>
            <person name="Dossat C."/>
            <person name="Karoui M.E."/>
            <person name="Frapy E."/>
            <person name="Garry L."/>
            <person name="Ghigo J.M."/>
            <person name="Gilles A.M."/>
            <person name="Johnson J."/>
            <person name="Le Bouguenec C."/>
            <person name="Lescat M."/>
            <person name="Mangenot S."/>
            <person name="Martinez-Jehanne V."/>
            <person name="Matic I."/>
            <person name="Nassif X."/>
            <person name="Oztas S."/>
            <person name="Petit M.A."/>
            <person name="Pichon C."/>
            <person name="Rouy Z."/>
            <person name="Ruf C.S."/>
            <person name="Schneider D."/>
            <person name="Tourret J."/>
            <person name="Vacherie B."/>
            <person name="Vallenet D."/>
            <person name="Medigue C."/>
            <person name="Rocha E.P.C."/>
            <person name="Denamur E."/>
        </authorList>
    </citation>
    <scope>NUCLEOTIDE SEQUENCE [LARGE SCALE GENOMIC DNA]</scope>
    <source>
        <strain>UMN026 / ExPEC</strain>
    </source>
</reference>